<keyword id="KW-0119">Carbohydrate metabolism</keyword>
<keyword id="KW-0165">Cleavage on pair of basic residues</keyword>
<keyword id="KW-0903">Direct protein sequencing</keyword>
<keyword id="KW-0325">Glycoprotein</keyword>
<keyword id="KW-0326">Glycosidase</keyword>
<keyword id="KW-0378">Hydrolase</keyword>
<keyword id="KW-0624">Polysaccharide degradation</keyword>
<keyword id="KW-1185">Reference proteome</keyword>
<keyword id="KW-0732">Signal</keyword>
<dbReference type="EC" id="3.2.1.3"/>
<dbReference type="EMBL" id="X67291">
    <property type="protein sequence ID" value="CAA47707.1"/>
    <property type="molecule type" value="Genomic_DNA"/>
</dbReference>
<dbReference type="EMBL" id="AL355932">
    <property type="protein sequence ID" value="CAB91426.1"/>
    <property type="molecule type" value="Genomic_DNA"/>
</dbReference>
<dbReference type="EMBL" id="CM002237">
    <property type="protein sequence ID" value="EAA27730.2"/>
    <property type="status" value="ALT_INIT"/>
    <property type="molecule type" value="Genomic_DNA"/>
</dbReference>
<dbReference type="PIR" id="S36364">
    <property type="entry name" value="S36364"/>
</dbReference>
<dbReference type="RefSeq" id="XP_956966.2">
    <property type="nucleotide sequence ID" value="XM_951873.3"/>
</dbReference>
<dbReference type="SMR" id="P14804"/>
<dbReference type="FunCoup" id="P14804">
    <property type="interactions" value="52"/>
</dbReference>
<dbReference type="STRING" id="367110.P14804"/>
<dbReference type="Allergome" id="10750">
    <property type="allergen name" value="Neu cr Glucoamylase"/>
</dbReference>
<dbReference type="CAZy" id="CBM20">
    <property type="family name" value="Carbohydrate-Binding Module Family 20"/>
</dbReference>
<dbReference type="CAZy" id="GH15">
    <property type="family name" value="Glycoside Hydrolase Family 15"/>
</dbReference>
<dbReference type="GlyCosmos" id="P14804">
    <property type="glycosylation" value="3 sites, No reported glycans"/>
</dbReference>
<dbReference type="PaxDb" id="5141-EFNCRP00000001634"/>
<dbReference type="EnsemblFungi" id="EAA27730">
    <property type="protein sequence ID" value="EAA27730"/>
    <property type="gene ID" value="NCU01517"/>
</dbReference>
<dbReference type="GeneID" id="3873129"/>
<dbReference type="KEGG" id="ncr:NCU01517"/>
<dbReference type="HOGENOM" id="CLU_012173_1_0_1"/>
<dbReference type="InParanoid" id="P14804"/>
<dbReference type="OrthoDB" id="6123450at2759"/>
<dbReference type="Proteomes" id="UP000001805">
    <property type="component" value="Chromosome 6, Linkage Group II"/>
</dbReference>
<dbReference type="GO" id="GO:0000324">
    <property type="term" value="C:fungal-type vacuole"/>
    <property type="evidence" value="ECO:0000318"/>
    <property type="project" value="GO_Central"/>
</dbReference>
<dbReference type="GO" id="GO:0004339">
    <property type="term" value="F:glucan 1,4-alpha-glucosidase activity"/>
    <property type="evidence" value="ECO:0007669"/>
    <property type="project" value="UniProtKB-EC"/>
</dbReference>
<dbReference type="GO" id="GO:0004553">
    <property type="term" value="F:hydrolase activity, hydrolyzing O-glycosyl compounds"/>
    <property type="evidence" value="ECO:0000318"/>
    <property type="project" value="GO_Central"/>
</dbReference>
<dbReference type="GO" id="GO:2001070">
    <property type="term" value="F:starch binding"/>
    <property type="evidence" value="ECO:0007669"/>
    <property type="project" value="InterPro"/>
</dbReference>
<dbReference type="GO" id="GO:0000272">
    <property type="term" value="P:polysaccharide catabolic process"/>
    <property type="evidence" value="ECO:0007669"/>
    <property type="project" value="UniProtKB-KW"/>
</dbReference>
<dbReference type="CDD" id="cd05811">
    <property type="entry name" value="CBM20_glucoamylase"/>
    <property type="match status" value="1"/>
</dbReference>
<dbReference type="FunFam" id="1.50.10.10:FF:000018">
    <property type="entry name" value="Glucoamylase"/>
    <property type="match status" value="1"/>
</dbReference>
<dbReference type="FunFam" id="2.60.40.10:FF:000552">
    <property type="entry name" value="Related to glucoamylase"/>
    <property type="match status" value="1"/>
</dbReference>
<dbReference type="Gene3D" id="1.50.10.10">
    <property type="match status" value="1"/>
</dbReference>
<dbReference type="Gene3D" id="2.60.40.10">
    <property type="entry name" value="Immunoglobulins"/>
    <property type="match status" value="1"/>
</dbReference>
<dbReference type="InterPro" id="IPR008928">
    <property type="entry name" value="6-hairpin_glycosidase_sf"/>
</dbReference>
<dbReference type="InterPro" id="IPR012341">
    <property type="entry name" value="6hp_glycosidase-like_sf"/>
</dbReference>
<dbReference type="InterPro" id="IPR013784">
    <property type="entry name" value="Carb-bd-like_fold"/>
</dbReference>
<dbReference type="InterPro" id="IPR002044">
    <property type="entry name" value="CBM20"/>
</dbReference>
<dbReference type="InterPro" id="IPR034836">
    <property type="entry name" value="CBM20_glucoamylase"/>
</dbReference>
<dbReference type="InterPro" id="IPR011613">
    <property type="entry name" value="GH15-like"/>
</dbReference>
<dbReference type="InterPro" id="IPR000165">
    <property type="entry name" value="Glucoamylase"/>
</dbReference>
<dbReference type="InterPro" id="IPR046966">
    <property type="entry name" value="Glucoamylase_active_site"/>
</dbReference>
<dbReference type="InterPro" id="IPR008291">
    <property type="entry name" value="Glucoamylase_SBD"/>
</dbReference>
<dbReference type="InterPro" id="IPR013783">
    <property type="entry name" value="Ig-like_fold"/>
</dbReference>
<dbReference type="PANTHER" id="PTHR31616:SF12">
    <property type="entry name" value="GLUCOAMYLASE"/>
    <property type="match status" value="1"/>
</dbReference>
<dbReference type="PANTHER" id="PTHR31616">
    <property type="entry name" value="TREHALASE"/>
    <property type="match status" value="1"/>
</dbReference>
<dbReference type="Pfam" id="PF00686">
    <property type="entry name" value="CBM_20"/>
    <property type="match status" value="1"/>
</dbReference>
<dbReference type="Pfam" id="PF00723">
    <property type="entry name" value="Glyco_hydro_15"/>
    <property type="match status" value="1"/>
</dbReference>
<dbReference type="PIRSF" id="PIRSF001031">
    <property type="entry name" value="Glu-a-glcsd_SBD"/>
    <property type="match status" value="1"/>
</dbReference>
<dbReference type="PRINTS" id="PR00736">
    <property type="entry name" value="GLHYDRLASE15"/>
</dbReference>
<dbReference type="SMART" id="SM01065">
    <property type="entry name" value="CBM_2"/>
    <property type="match status" value="1"/>
</dbReference>
<dbReference type="SUPFAM" id="SSF48208">
    <property type="entry name" value="Six-hairpin glycosidases"/>
    <property type="match status" value="1"/>
</dbReference>
<dbReference type="SUPFAM" id="SSF49452">
    <property type="entry name" value="Starch-binding domain-like"/>
    <property type="match status" value="1"/>
</dbReference>
<dbReference type="PROSITE" id="PS51166">
    <property type="entry name" value="CBM20"/>
    <property type="match status" value="1"/>
</dbReference>
<dbReference type="PROSITE" id="PS00820">
    <property type="entry name" value="GLUCOAMYLASE"/>
    <property type="match status" value="1"/>
</dbReference>
<protein>
    <recommendedName>
        <fullName>Glucoamylase</fullName>
        <ecNumber>3.2.1.3</ecNumber>
    </recommendedName>
    <alternativeName>
        <fullName>1,4-alpha-D-glucan glucohydrolase</fullName>
    </alternativeName>
    <alternativeName>
        <fullName>Glucan 1,4-alpha-glucosidase</fullName>
    </alternativeName>
</protein>
<name>AMYG_NEUCR</name>
<gene>
    <name type="primary">gla-1</name>
    <name type="ORF">B5O22.70</name>
    <name type="ORF">NCU01517</name>
</gene>
<reference key="1">
    <citation type="journal article" date="1993" name="Curr. Genet.">
        <title>Cloning and sequence analysis of the glucoamylase gene of Neurospora crassa.</title>
        <authorList>
            <person name="Stone P.J."/>
            <person name="Makoff A.J."/>
            <person name="Parish J.H."/>
            <person name="Radford A."/>
        </authorList>
    </citation>
    <scope>NUCLEOTIDE SEQUENCE [GENOMIC DNA]</scope>
    <source>
        <strain>ATCC 24698 / 74-OR23-1A / CBS 708.71 / DSM 1257 / FGSC 987</strain>
    </source>
</reference>
<reference key="2">
    <citation type="journal article" date="2003" name="Nucleic Acids Res.">
        <title>What's in the genome of a filamentous fungus? Analysis of the Neurospora genome sequence.</title>
        <authorList>
            <person name="Mannhaupt G."/>
            <person name="Montrone C."/>
            <person name="Haase D."/>
            <person name="Mewes H.-W."/>
            <person name="Aign V."/>
            <person name="Hoheisel J.D."/>
            <person name="Fartmann B."/>
            <person name="Nyakatura G."/>
            <person name="Kempken F."/>
            <person name="Maier J."/>
            <person name="Schulte U."/>
        </authorList>
    </citation>
    <scope>NUCLEOTIDE SEQUENCE [LARGE SCALE GENOMIC DNA]</scope>
    <source>
        <strain>ATCC 24698 / 74-OR23-1A / CBS 708.71 / DSM 1257 / FGSC 987</strain>
    </source>
</reference>
<reference key="3">
    <citation type="journal article" date="2003" name="Nature">
        <title>The genome sequence of the filamentous fungus Neurospora crassa.</title>
        <authorList>
            <person name="Galagan J.E."/>
            <person name="Calvo S.E."/>
            <person name="Borkovich K.A."/>
            <person name="Selker E.U."/>
            <person name="Read N.D."/>
            <person name="Jaffe D.B."/>
            <person name="FitzHugh W."/>
            <person name="Ma L.-J."/>
            <person name="Smirnov S."/>
            <person name="Purcell S."/>
            <person name="Rehman B."/>
            <person name="Elkins T."/>
            <person name="Engels R."/>
            <person name="Wang S."/>
            <person name="Nielsen C.B."/>
            <person name="Butler J."/>
            <person name="Endrizzi M."/>
            <person name="Qui D."/>
            <person name="Ianakiev P."/>
            <person name="Bell-Pedersen D."/>
            <person name="Nelson M.A."/>
            <person name="Werner-Washburne M."/>
            <person name="Selitrennikoff C.P."/>
            <person name="Kinsey J.A."/>
            <person name="Braun E.L."/>
            <person name="Zelter A."/>
            <person name="Schulte U."/>
            <person name="Kothe G.O."/>
            <person name="Jedd G."/>
            <person name="Mewes H.-W."/>
            <person name="Staben C."/>
            <person name="Marcotte E."/>
            <person name="Greenberg D."/>
            <person name="Roy A."/>
            <person name="Foley K."/>
            <person name="Naylor J."/>
            <person name="Stange-Thomann N."/>
            <person name="Barrett R."/>
            <person name="Gnerre S."/>
            <person name="Kamal M."/>
            <person name="Kamvysselis M."/>
            <person name="Mauceli E.W."/>
            <person name="Bielke C."/>
            <person name="Rudd S."/>
            <person name="Frishman D."/>
            <person name="Krystofova S."/>
            <person name="Rasmussen C."/>
            <person name="Metzenberg R.L."/>
            <person name="Perkins D.D."/>
            <person name="Kroken S."/>
            <person name="Cogoni C."/>
            <person name="Macino G."/>
            <person name="Catcheside D.E.A."/>
            <person name="Li W."/>
            <person name="Pratt R.J."/>
            <person name="Osmani S.A."/>
            <person name="DeSouza C.P.C."/>
            <person name="Glass N.L."/>
            <person name="Orbach M.J."/>
            <person name="Berglund J.A."/>
            <person name="Voelker R."/>
            <person name="Yarden O."/>
            <person name="Plamann M."/>
            <person name="Seiler S."/>
            <person name="Dunlap J.C."/>
            <person name="Radford A."/>
            <person name="Aramayo R."/>
            <person name="Natvig D.O."/>
            <person name="Alex L.A."/>
            <person name="Mannhaupt G."/>
            <person name="Ebbole D.J."/>
            <person name="Freitag M."/>
            <person name="Paulsen I."/>
            <person name="Sachs M.S."/>
            <person name="Lander E.S."/>
            <person name="Nusbaum C."/>
            <person name="Birren B.W."/>
        </authorList>
    </citation>
    <scope>NUCLEOTIDE SEQUENCE [LARGE SCALE GENOMIC DNA]</scope>
    <source>
        <strain>ATCC 24698 / 74-OR23-1A / CBS 708.71 / DSM 1257 / FGSC 987</strain>
    </source>
</reference>
<reference key="4">
    <citation type="journal article" date="1989" name="Enzyme Microb. Technol.">
        <title>Exported proteins of Neurospora crassa: 1-glucoamylase.</title>
        <authorList>
            <person name="Koh-Luar S.I."/>
            <person name="Parish J.H."/>
            <person name="Bleasby A.J."/>
            <person name="Pappin D.J.C."/>
            <person name="Ainley K."/>
            <person name="Johansen F.E."/>
            <person name="Radford A."/>
        </authorList>
    </citation>
    <scope>PROTEIN SEQUENCE OF 36-65</scope>
    <source>
        <strain>ATCC 24698 / 74-OR23-1A / CBS 708.71 / DSM 1257 / FGSC 987</strain>
    </source>
</reference>
<evidence type="ECO:0000250" key="1"/>
<evidence type="ECO:0000255" key="2"/>
<evidence type="ECO:0000255" key="3">
    <source>
        <dbReference type="PROSITE-ProRule" id="PRU00594"/>
    </source>
</evidence>
<evidence type="ECO:0000255" key="4">
    <source>
        <dbReference type="PROSITE-ProRule" id="PRU10051"/>
    </source>
</evidence>
<evidence type="ECO:0000305" key="5"/>
<organism>
    <name type="scientific">Neurospora crassa (strain ATCC 24698 / 74-OR23-1A / CBS 708.71 / DSM 1257 / FGSC 987)</name>
    <dbReference type="NCBI Taxonomy" id="367110"/>
    <lineage>
        <taxon>Eukaryota</taxon>
        <taxon>Fungi</taxon>
        <taxon>Dikarya</taxon>
        <taxon>Ascomycota</taxon>
        <taxon>Pezizomycotina</taxon>
        <taxon>Sordariomycetes</taxon>
        <taxon>Sordariomycetidae</taxon>
        <taxon>Sordariales</taxon>
        <taxon>Sordariaceae</taxon>
        <taxon>Neurospora</taxon>
    </lineage>
</organism>
<proteinExistence type="evidence at protein level"/>
<accession>P14804</accession>
<accession>Q7RV62</accession>
<accession>Q9P5U5</accession>
<comment type="catalytic activity">
    <reaction>
        <text>Hydrolysis of terminal (1-&gt;4)-linked alpha-D-glucose residues successively from non-reducing ends of the chains with release of beta-D-glucose.</text>
        <dbReference type="EC" id="3.2.1.3"/>
    </reaction>
</comment>
<comment type="similarity">
    <text evidence="5">Belongs to the glycosyl hydrolase 15 family.</text>
</comment>
<comment type="sequence caution" evidence="5">
    <conflict type="erroneous initiation">
        <sequence resource="EMBL-CDS" id="EAA27730"/>
    </conflict>
    <text>Extended N-terminus.</text>
</comment>
<sequence>MHLVSSLLVVGAAFQAVLGLPDPLHEKRHSDIIKRSVDSYIQTETPIAQKNLLCNIGASGCRASGAASGVVVASPSKSSPDYWYTWTRDAALVTKLIVDEFTNDYNTTLQNTIQAYAAAQAKLQGVSNPSGSLSNGAGLGEPKFMVDLQQFTGAWGRPQRDGPPLRAIALIGYGKWLVSNGYADTAKSIIWPIVKNDLAYTAQYWNNTGFDLWEEVNSSSFFTIAASHRALVEGSAFAKSVGSSCSACDAIAPQILCFQQSFWSNSGYIISNFVNYRSGKDINSVLTSIHNFDPAAGCDVNTFQPCSDRALANHKVVVDSMRFWGVNSGRTAGKAAAVGRYAEDVYYNGNPWYLATLAAAEQLYDAVYVWKKQGSITVTSTSLAFFKDLVPSVSTGTYSSSSSTYTAIINAVTTYADGFVDIVAQYTPSDGSLAEQFDKDSGAPLSATHLTWSYASFLSAAARRAGIVPPSWGAASANSLPGSCSASTVAGSYATATATSFPANLTPASTTVTPPTQTGCAADHEVLVTFNEKVTTSYGQTVKVVGSIAALGNWAPASGVTLSAKQYSSSNPLWSTTIALPQGTSFKYKYVVVNSDGSVKWENDPDRSYAVGTDCASTATLDDTWR</sequence>
<feature type="signal peptide" evidence="2">
    <location>
        <begin position="1"/>
        <end position="19"/>
    </location>
</feature>
<feature type="propeptide" id="PRO_0000001469" evidence="2">
    <location>
        <begin position="20"/>
        <end position="35"/>
    </location>
</feature>
<feature type="chain" id="PRO_0000001470" description="Glucoamylase">
    <location>
        <begin position="36"/>
        <end position="626"/>
    </location>
</feature>
<feature type="domain" description="CBM20" evidence="3">
    <location>
        <begin position="520"/>
        <end position="626"/>
    </location>
</feature>
<feature type="active site" description="Proton acceptor" evidence="4">
    <location>
        <position position="211"/>
    </location>
</feature>
<feature type="active site" description="Proton donor" evidence="4">
    <location>
        <position position="214"/>
    </location>
</feature>
<feature type="binding site" evidence="1">
    <location>
        <position position="155"/>
    </location>
    <ligand>
        <name>substrate</name>
    </ligand>
</feature>
<feature type="glycosylation site" description="N-linked (GlcNAc...) asparagine" evidence="2">
    <location>
        <position position="106"/>
    </location>
</feature>
<feature type="glycosylation site" description="N-linked (GlcNAc...) asparagine" evidence="2">
    <location>
        <position position="206"/>
    </location>
</feature>
<feature type="glycosylation site" description="N-linked (GlcNAc...) asparagine" evidence="2">
    <location>
        <position position="217"/>
    </location>
</feature>
<feature type="sequence conflict" description="In Ref. 1; CAA47707." evidence="5" ref="1">
    <location>
        <position position="82"/>
    </location>
</feature>
<feature type="sequence conflict" description="In Ref. 1; CAA47707." evidence="5" ref="1">
    <original>A</original>
    <variation>R</variation>
    <location>
        <position position="550"/>
    </location>
</feature>
<feature type="sequence conflict" description="In Ref. 1; CAA47707." evidence="5" ref="1">
    <original>V</original>
    <variation>L</variation>
    <location>
        <position position="560"/>
    </location>
</feature>